<gene>
    <name evidence="1" type="primary">lexA</name>
    <name type="ordered locus">Bcenmc03_1577</name>
</gene>
<feature type="chain" id="PRO_1000089551" description="LexA repressor">
    <location>
        <begin position="1"/>
        <end position="215"/>
    </location>
</feature>
<feature type="DNA-binding region" description="H-T-H motif" evidence="1">
    <location>
        <begin position="28"/>
        <end position="48"/>
    </location>
</feature>
<feature type="active site" description="For autocatalytic cleavage activity" evidence="1">
    <location>
        <position position="133"/>
    </location>
</feature>
<feature type="active site" description="For autocatalytic cleavage activity" evidence="1">
    <location>
        <position position="170"/>
    </location>
</feature>
<feature type="site" description="Cleavage; by autolysis" evidence="1">
    <location>
        <begin position="98"/>
        <end position="99"/>
    </location>
</feature>
<dbReference type="EC" id="3.4.21.88" evidence="1"/>
<dbReference type="EMBL" id="CP000958">
    <property type="protein sequence ID" value="ACA90750.1"/>
    <property type="molecule type" value="Genomic_DNA"/>
</dbReference>
<dbReference type="RefSeq" id="WP_006476077.1">
    <property type="nucleotide sequence ID" value="NC_010508.1"/>
</dbReference>
<dbReference type="SMR" id="B1K0Z6"/>
<dbReference type="MEROPS" id="S24.001"/>
<dbReference type="GeneID" id="83048371"/>
<dbReference type="KEGG" id="bcm:Bcenmc03_1577"/>
<dbReference type="HOGENOM" id="CLU_066192_45_3_4"/>
<dbReference type="Proteomes" id="UP000002169">
    <property type="component" value="Chromosome 1"/>
</dbReference>
<dbReference type="GO" id="GO:0003677">
    <property type="term" value="F:DNA binding"/>
    <property type="evidence" value="ECO:0007669"/>
    <property type="project" value="UniProtKB-UniRule"/>
</dbReference>
<dbReference type="GO" id="GO:0004252">
    <property type="term" value="F:serine-type endopeptidase activity"/>
    <property type="evidence" value="ECO:0007669"/>
    <property type="project" value="UniProtKB-UniRule"/>
</dbReference>
<dbReference type="GO" id="GO:0006281">
    <property type="term" value="P:DNA repair"/>
    <property type="evidence" value="ECO:0007669"/>
    <property type="project" value="UniProtKB-UniRule"/>
</dbReference>
<dbReference type="GO" id="GO:0006260">
    <property type="term" value="P:DNA replication"/>
    <property type="evidence" value="ECO:0007669"/>
    <property type="project" value="UniProtKB-UniRule"/>
</dbReference>
<dbReference type="GO" id="GO:0045892">
    <property type="term" value="P:negative regulation of DNA-templated transcription"/>
    <property type="evidence" value="ECO:0007669"/>
    <property type="project" value="UniProtKB-UniRule"/>
</dbReference>
<dbReference type="GO" id="GO:0006508">
    <property type="term" value="P:proteolysis"/>
    <property type="evidence" value="ECO:0007669"/>
    <property type="project" value="InterPro"/>
</dbReference>
<dbReference type="GO" id="GO:0009432">
    <property type="term" value="P:SOS response"/>
    <property type="evidence" value="ECO:0007669"/>
    <property type="project" value="UniProtKB-UniRule"/>
</dbReference>
<dbReference type="CDD" id="cd06529">
    <property type="entry name" value="S24_LexA-like"/>
    <property type="match status" value="1"/>
</dbReference>
<dbReference type="FunFam" id="1.10.10.10:FF:000009">
    <property type="entry name" value="LexA repressor"/>
    <property type="match status" value="1"/>
</dbReference>
<dbReference type="FunFam" id="2.10.109.10:FF:000001">
    <property type="entry name" value="LexA repressor"/>
    <property type="match status" value="1"/>
</dbReference>
<dbReference type="Gene3D" id="2.10.109.10">
    <property type="entry name" value="Umud Fragment, subunit A"/>
    <property type="match status" value="1"/>
</dbReference>
<dbReference type="Gene3D" id="1.10.10.10">
    <property type="entry name" value="Winged helix-like DNA-binding domain superfamily/Winged helix DNA-binding domain"/>
    <property type="match status" value="1"/>
</dbReference>
<dbReference type="HAMAP" id="MF_00015">
    <property type="entry name" value="LexA"/>
    <property type="match status" value="1"/>
</dbReference>
<dbReference type="InterPro" id="IPR006200">
    <property type="entry name" value="LexA"/>
</dbReference>
<dbReference type="InterPro" id="IPR039418">
    <property type="entry name" value="LexA-like"/>
</dbReference>
<dbReference type="InterPro" id="IPR036286">
    <property type="entry name" value="LexA/Signal_pep-like_sf"/>
</dbReference>
<dbReference type="InterPro" id="IPR006199">
    <property type="entry name" value="LexA_DNA-bd_dom"/>
</dbReference>
<dbReference type="InterPro" id="IPR050077">
    <property type="entry name" value="LexA_repressor"/>
</dbReference>
<dbReference type="InterPro" id="IPR006197">
    <property type="entry name" value="Peptidase_S24_LexA"/>
</dbReference>
<dbReference type="InterPro" id="IPR015927">
    <property type="entry name" value="Peptidase_S24_S26A/B/C"/>
</dbReference>
<dbReference type="InterPro" id="IPR036388">
    <property type="entry name" value="WH-like_DNA-bd_sf"/>
</dbReference>
<dbReference type="InterPro" id="IPR036390">
    <property type="entry name" value="WH_DNA-bd_sf"/>
</dbReference>
<dbReference type="NCBIfam" id="TIGR00498">
    <property type="entry name" value="lexA"/>
    <property type="match status" value="1"/>
</dbReference>
<dbReference type="PANTHER" id="PTHR33516">
    <property type="entry name" value="LEXA REPRESSOR"/>
    <property type="match status" value="1"/>
</dbReference>
<dbReference type="PANTHER" id="PTHR33516:SF2">
    <property type="entry name" value="LEXA REPRESSOR-RELATED"/>
    <property type="match status" value="1"/>
</dbReference>
<dbReference type="Pfam" id="PF01726">
    <property type="entry name" value="LexA_DNA_bind"/>
    <property type="match status" value="1"/>
</dbReference>
<dbReference type="Pfam" id="PF00717">
    <property type="entry name" value="Peptidase_S24"/>
    <property type="match status" value="1"/>
</dbReference>
<dbReference type="PRINTS" id="PR00726">
    <property type="entry name" value="LEXASERPTASE"/>
</dbReference>
<dbReference type="SUPFAM" id="SSF51306">
    <property type="entry name" value="LexA/Signal peptidase"/>
    <property type="match status" value="1"/>
</dbReference>
<dbReference type="SUPFAM" id="SSF46785">
    <property type="entry name" value="Winged helix' DNA-binding domain"/>
    <property type="match status" value="1"/>
</dbReference>
<proteinExistence type="inferred from homology"/>
<accession>B1K0Z6</accession>
<organism>
    <name type="scientific">Burkholderia orbicola (strain MC0-3)</name>
    <dbReference type="NCBI Taxonomy" id="406425"/>
    <lineage>
        <taxon>Bacteria</taxon>
        <taxon>Pseudomonadati</taxon>
        <taxon>Pseudomonadota</taxon>
        <taxon>Betaproteobacteria</taxon>
        <taxon>Burkholderiales</taxon>
        <taxon>Burkholderiaceae</taxon>
        <taxon>Burkholderia</taxon>
        <taxon>Burkholderia cepacia complex</taxon>
        <taxon>Burkholderia orbicola</taxon>
    </lineage>
</organism>
<keyword id="KW-0068">Autocatalytic cleavage</keyword>
<keyword id="KW-0227">DNA damage</keyword>
<keyword id="KW-0234">DNA repair</keyword>
<keyword id="KW-0235">DNA replication</keyword>
<keyword id="KW-0238">DNA-binding</keyword>
<keyword id="KW-0378">Hydrolase</keyword>
<keyword id="KW-0678">Repressor</keyword>
<keyword id="KW-0742">SOS response</keyword>
<keyword id="KW-0804">Transcription</keyword>
<keyword id="KW-0805">Transcription regulation</keyword>
<evidence type="ECO:0000255" key="1">
    <source>
        <dbReference type="HAMAP-Rule" id="MF_00015"/>
    </source>
</evidence>
<protein>
    <recommendedName>
        <fullName evidence="1">LexA repressor</fullName>
        <ecNumber evidence="1">3.4.21.88</ecNumber>
    </recommendedName>
</protein>
<reference key="1">
    <citation type="submission" date="2008-02" db="EMBL/GenBank/DDBJ databases">
        <title>Complete sequence of chromosome 1 of Burkholderia cenocepacia MC0-3.</title>
        <authorList>
            <person name="Copeland A."/>
            <person name="Lucas S."/>
            <person name="Lapidus A."/>
            <person name="Barry K."/>
            <person name="Bruce D."/>
            <person name="Goodwin L."/>
            <person name="Glavina del Rio T."/>
            <person name="Dalin E."/>
            <person name="Tice H."/>
            <person name="Pitluck S."/>
            <person name="Chain P."/>
            <person name="Malfatti S."/>
            <person name="Shin M."/>
            <person name="Vergez L."/>
            <person name="Schmutz J."/>
            <person name="Larimer F."/>
            <person name="Land M."/>
            <person name="Hauser L."/>
            <person name="Kyrpides N."/>
            <person name="Mikhailova N."/>
            <person name="Tiedje J."/>
            <person name="Richardson P."/>
        </authorList>
    </citation>
    <scope>NUCLEOTIDE SEQUENCE [LARGE SCALE GENOMIC DNA]</scope>
    <source>
        <strain>MC0-3</strain>
    </source>
</reference>
<name>LEXA_BURO0</name>
<sequence length="215" mass="23180">MTKLTARQQQVFDLIRRAIERSGFPPTRAEIAAELGFSSPNAAEEHLRALARKGVIELAAGASRGIRLLGIDDAPHQFTLPHAGLMQLSLPLVGRVAAGSPILAQEHISQHYACDPALFTSKPDYLLKVRGLSMRDAGILDGDLLAVQKRTEAKDGQIIVARLGDDVTVKRLMRRPGGLELIAENPDYENIFVKAGSADFALEGIAVGLIRSGEL</sequence>
<comment type="function">
    <text evidence="1">Represses a number of genes involved in the response to DNA damage (SOS response), including recA and lexA. In the presence of single-stranded DNA, RecA interacts with LexA causing an autocatalytic cleavage which disrupts the DNA-binding part of LexA, leading to derepression of the SOS regulon and eventually DNA repair.</text>
</comment>
<comment type="catalytic activity">
    <reaction evidence="1">
        <text>Hydrolysis of Ala-|-Gly bond in repressor LexA.</text>
        <dbReference type="EC" id="3.4.21.88"/>
    </reaction>
</comment>
<comment type="subunit">
    <text evidence="1">Homodimer.</text>
</comment>
<comment type="similarity">
    <text evidence="1">Belongs to the peptidase S24 family.</text>
</comment>